<accession>O66434</accession>
<name>RL2_AQUAE</name>
<keyword id="KW-1185">Reference proteome</keyword>
<keyword id="KW-0687">Ribonucleoprotein</keyword>
<keyword id="KW-0689">Ribosomal protein</keyword>
<keyword id="KW-0694">RNA-binding</keyword>
<keyword id="KW-0699">rRNA-binding</keyword>
<organism>
    <name type="scientific">Aquifex aeolicus (strain VF5)</name>
    <dbReference type="NCBI Taxonomy" id="224324"/>
    <lineage>
        <taxon>Bacteria</taxon>
        <taxon>Pseudomonadati</taxon>
        <taxon>Aquificota</taxon>
        <taxon>Aquificia</taxon>
        <taxon>Aquificales</taxon>
        <taxon>Aquificaceae</taxon>
        <taxon>Aquifex</taxon>
    </lineage>
</organism>
<protein>
    <recommendedName>
        <fullName evidence="1">Large ribosomal subunit protein uL2</fullName>
    </recommendedName>
    <alternativeName>
        <fullName evidence="3">50S ribosomal protein L2</fullName>
    </alternativeName>
</protein>
<dbReference type="EMBL" id="AE000657">
    <property type="protein sequence ID" value="AAC06392.1"/>
    <property type="molecule type" value="Genomic_DNA"/>
</dbReference>
<dbReference type="PIR" id="G70300">
    <property type="entry name" value="G70300"/>
</dbReference>
<dbReference type="RefSeq" id="NP_212992.1">
    <property type="nucleotide sequence ID" value="NC_000918.1"/>
</dbReference>
<dbReference type="RefSeq" id="WP_010879930.1">
    <property type="nucleotide sequence ID" value="NC_000918.1"/>
</dbReference>
<dbReference type="SMR" id="O66434"/>
<dbReference type="FunCoup" id="O66434">
    <property type="interactions" value="551"/>
</dbReference>
<dbReference type="STRING" id="224324.aq_013"/>
<dbReference type="EnsemblBacteria" id="AAC06392">
    <property type="protein sequence ID" value="AAC06392"/>
    <property type="gene ID" value="aq_013"/>
</dbReference>
<dbReference type="KEGG" id="aae:aq_013"/>
<dbReference type="PATRIC" id="fig|224324.8.peg.7"/>
<dbReference type="eggNOG" id="COG0090">
    <property type="taxonomic scope" value="Bacteria"/>
</dbReference>
<dbReference type="HOGENOM" id="CLU_036235_2_1_0"/>
<dbReference type="InParanoid" id="O66434"/>
<dbReference type="OrthoDB" id="9778722at2"/>
<dbReference type="Proteomes" id="UP000000798">
    <property type="component" value="Chromosome"/>
</dbReference>
<dbReference type="GO" id="GO:0015934">
    <property type="term" value="C:large ribosomal subunit"/>
    <property type="evidence" value="ECO:0007669"/>
    <property type="project" value="InterPro"/>
</dbReference>
<dbReference type="GO" id="GO:0003723">
    <property type="term" value="F:RNA binding"/>
    <property type="evidence" value="ECO:0000318"/>
    <property type="project" value="GO_Central"/>
</dbReference>
<dbReference type="GO" id="GO:0019843">
    <property type="term" value="F:rRNA binding"/>
    <property type="evidence" value="ECO:0007669"/>
    <property type="project" value="UniProtKB-UniRule"/>
</dbReference>
<dbReference type="GO" id="GO:0003735">
    <property type="term" value="F:structural constituent of ribosome"/>
    <property type="evidence" value="ECO:0000318"/>
    <property type="project" value="GO_Central"/>
</dbReference>
<dbReference type="GO" id="GO:0016740">
    <property type="term" value="F:transferase activity"/>
    <property type="evidence" value="ECO:0007669"/>
    <property type="project" value="InterPro"/>
</dbReference>
<dbReference type="GO" id="GO:0002181">
    <property type="term" value="P:cytoplasmic translation"/>
    <property type="evidence" value="ECO:0000318"/>
    <property type="project" value="GO_Central"/>
</dbReference>
<dbReference type="FunFam" id="2.30.30.30:FF:000001">
    <property type="entry name" value="50S ribosomal protein L2"/>
    <property type="match status" value="1"/>
</dbReference>
<dbReference type="FunFam" id="2.40.50.140:FF:000003">
    <property type="entry name" value="50S ribosomal protein L2"/>
    <property type="match status" value="1"/>
</dbReference>
<dbReference type="FunFam" id="4.10.950.10:FF:000001">
    <property type="entry name" value="50S ribosomal protein L2"/>
    <property type="match status" value="1"/>
</dbReference>
<dbReference type="Gene3D" id="2.30.30.30">
    <property type="match status" value="1"/>
</dbReference>
<dbReference type="Gene3D" id="2.40.50.140">
    <property type="entry name" value="Nucleic acid-binding proteins"/>
    <property type="match status" value="1"/>
</dbReference>
<dbReference type="Gene3D" id="4.10.950.10">
    <property type="entry name" value="Ribosomal protein L2, domain 3"/>
    <property type="match status" value="1"/>
</dbReference>
<dbReference type="HAMAP" id="MF_01320_B">
    <property type="entry name" value="Ribosomal_uL2_B"/>
    <property type="match status" value="1"/>
</dbReference>
<dbReference type="InterPro" id="IPR012340">
    <property type="entry name" value="NA-bd_OB-fold"/>
</dbReference>
<dbReference type="InterPro" id="IPR014722">
    <property type="entry name" value="Rib_uL2_dom2"/>
</dbReference>
<dbReference type="InterPro" id="IPR002171">
    <property type="entry name" value="Ribosomal_uL2"/>
</dbReference>
<dbReference type="InterPro" id="IPR005880">
    <property type="entry name" value="Ribosomal_uL2_bac/org-type"/>
</dbReference>
<dbReference type="InterPro" id="IPR022669">
    <property type="entry name" value="Ribosomal_uL2_C"/>
</dbReference>
<dbReference type="InterPro" id="IPR022671">
    <property type="entry name" value="Ribosomal_uL2_CS"/>
</dbReference>
<dbReference type="InterPro" id="IPR014726">
    <property type="entry name" value="Ribosomal_uL2_dom3"/>
</dbReference>
<dbReference type="InterPro" id="IPR022666">
    <property type="entry name" value="Ribosomal_uL2_RNA-bd_dom"/>
</dbReference>
<dbReference type="InterPro" id="IPR008991">
    <property type="entry name" value="Translation_prot_SH3-like_sf"/>
</dbReference>
<dbReference type="NCBIfam" id="TIGR01171">
    <property type="entry name" value="rplB_bact"/>
    <property type="match status" value="1"/>
</dbReference>
<dbReference type="PANTHER" id="PTHR13691:SF5">
    <property type="entry name" value="LARGE RIBOSOMAL SUBUNIT PROTEIN UL2M"/>
    <property type="match status" value="1"/>
</dbReference>
<dbReference type="PANTHER" id="PTHR13691">
    <property type="entry name" value="RIBOSOMAL PROTEIN L2"/>
    <property type="match status" value="1"/>
</dbReference>
<dbReference type="Pfam" id="PF00181">
    <property type="entry name" value="Ribosomal_L2"/>
    <property type="match status" value="1"/>
</dbReference>
<dbReference type="Pfam" id="PF03947">
    <property type="entry name" value="Ribosomal_L2_C"/>
    <property type="match status" value="1"/>
</dbReference>
<dbReference type="PIRSF" id="PIRSF002158">
    <property type="entry name" value="Ribosomal_L2"/>
    <property type="match status" value="1"/>
</dbReference>
<dbReference type="SMART" id="SM01383">
    <property type="entry name" value="Ribosomal_L2"/>
    <property type="match status" value="1"/>
</dbReference>
<dbReference type="SMART" id="SM01382">
    <property type="entry name" value="Ribosomal_L2_C"/>
    <property type="match status" value="1"/>
</dbReference>
<dbReference type="SUPFAM" id="SSF50249">
    <property type="entry name" value="Nucleic acid-binding proteins"/>
    <property type="match status" value="1"/>
</dbReference>
<dbReference type="SUPFAM" id="SSF50104">
    <property type="entry name" value="Translation proteins SH3-like domain"/>
    <property type="match status" value="1"/>
</dbReference>
<dbReference type="PROSITE" id="PS00467">
    <property type="entry name" value="RIBOSOMAL_L2"/>
    <property type="match status" value="1"/>
</dbReference>
<proteinExistence type="inferred from homology"/>
<feature type="chain" id="PRO_0000129522" description="Large ribosomal subunit protein uL2">
    <location>
        <begin position="1"/>
        <end position="304"/>
    </location>
</feature>
<feature type="region of interest" description="Disordered" evidence="2">
    <location>
        <begin position="246"/>
        <end position="282"/>
    </location>
</feature>
<feature type="compositionally biased region" description="Basic and acidic residues" evidence="2">
    <location>
        <begin position="256"/>
        <end position="272"/>
    </location>
</feature>
<sequence>MGVRKLKPVTNGTRHAVLYDFEEIEKLVRKGKEWVLLKKNQVEPEKSLLKWWHRAKGRSRQRGNITARHRGGGHKKLYRIIDFKRDKSLVPAKVVSIEYDPFRSARICLLHYADGEKRYIIWPEGLKVGDTVMSISWEDAEAGKPLPEIKPGNAMPLKYIPEGTIVHNIEFIPGKGGQIARAAGTWAQVLGRSTRKGYVLVRMPSGEVRMIHERCMATVGRVGLAEHELVKLGKAGRARWLGWRPHTRGTAMNPVDHPHGGGEGRTRGKHPESPWGWKTKGYKTRRGKKYSDQFIVTRRDGRPL</sequence>
<gene>
    <name evidence="1" type="primary">rplB</name>
    <name type="ordered locus">aq_013</name>
</gene>
<reference key="1">
    <citation type="journal article" date="1998" name="Nature">
        <title>The complete genome of the hyperthermophilic bacterium Aquifex aeolicus.</title>
        <authorList>
            <person name="Deckert G."/>
            <person name="Warren P.V."/>
            <person name="Gaasterland T."/>
            <person name="Young W.G."/>
            <person name="Lenox A.L."/>
            <person name="Graham D.E."/>
            <person name="Overbeek R."/>
            <person name="Snead M.A."/>
            <person name="Keller M."/>
            <person name="Aujay M."/>
            <person name="Huber R."/>
            <person name="Feldman R.A."/>
            <person name="Short J.M."/>
            <person name="Olsen G.J."/>
            <person name="Swanson R.V."/>
        </authorList>
    </citation>
    <scope>NUCLEOTIDE SEQUENCE [LARGE SCALE GENOMIC DNA]</scope>
    <source>
        <strain>VF5</strain>
    </source>
</reference>
<comment type="function">
    <text evidence="1">One of the primary rRNA binding proteins. Required for association of the 30S and 50S subunits to form the 70S ribosome, for tRNA binding and peptide bond formation. It has been suggested to have peptidyltransferase activity; this is somewhat controversial. Makes several contacts with the 16S rRNA in the 70S ribosome.</text>
</comment>
<comment type="subunit">
    <text evidence="1">Part of the 50S ribosomal subunit. Forms a bridge to the 30S subunit in the 70S ribosome.</text>
</comment>
<comment type="similarity">
    <text evidence="1">Belongs to the universal ribosomal protein uL2 family.</text>
</comment>
<evidence type="ECO:0000255" key="1">
    <source>
        <dbReference type="HAMAP-Rule" id="MF_01320"/>
    </source>
</evidence>
<evidence type="ECO:0000256" key="2">
    <source>
        <dbReference type="SAM" id="MobiDB-lite"/>
    </source>
</evidence>
<evidence type="ECO:0000305" key="3"/>